<keyword id="KW-0963">Cytoplasm</keyword>
<keyword id="KW-0378">Hydrolase</keyword>
<keyword id="KW-0520">NAD</keyword>
<keyword id="KW-0554">One-carbon metabolism</keyword>
<proteinExistence type="inferred from homology"/>
<dbReference type="EC" id="3.13.2.1" evidence="1"/>
<dbReference type="EMBL" id="CP001197">
    <property type="protein sequence ID" value="ACL09519.1"/>
    <property type="molecule type" value="Genomic_DNA"/>
</dbReference>
<dbReference type="SMR" id="B8DR41"/>
<dbReference type="STRING" id="883.DvMF_2580"/>
<dbReference type="KEGG" id="dvm:DvMF_2580"/>
<dbReference type="eggNOG" id="COG0499">
    <property type="taxonomic scope" value="Bacteria"/>
</dbReference>
<dbReference type="HOGENOM" id="CLU_025194_2_1_7"/>
<dbReference type="OrthoDB" id="9802717at2"/>
<dbReference type="UniPathway" id="UPA00314">
    <property type="reaction ID" value="UER00076"/>
</dbReference>
<dbReference type="GO" id="GO:0005829">
    <property type="term" value="C:cytosol"/>
    <property type="evidence" value="ECO:0007669"/>
    <property type="project" value="TreeGrafter"/>
</dbReference>
<dbReference type="GO" id="GO:0004013">
    <property type="term" value="F:adenosylhomocysteinase activity"/>
    <property type="evidence" value="ECO:0007669"/>
    <property type="project" value="UniProtKB-UniRule"/>
</dbReference>
<dbReference type="GO" id="GO:0071269">
    <property type="term" value="P:L-homocysteine biosynthetic process"/>
    <property type="evidence" value="ECO:0007669"/>
    <property type="project" value="UniProtKB-UniRule"/>
</dbReference>
<dbReference type="GO" id="GO:0006730">
    <property type="term" value="P:one-carbon metabolic process"/>
    <property type="evidence" value="ECO:0007669"/>
    <property type="project" value="UniProtKB-KW"/>
</dbReference>
<dbReference type="GO" id="GO:0033353">
    <property type="term" value="P:S-adenosylmethionine cycle"/>
    <property type="evidence" value="ECO:0007669"/>
    <property type="project" value="TreeGrafter"/>
</dbReference>
<dbReference type="CDD" id="cd00401">
    <property type="entry name" value="SAHH"/>
    <property type="match status" value="1"/>
</dbReference>
<dbReference type="FunFam" id="3.40.50.720:FF:000004">
    <property type="entry name" value="Adenosylhomocysteinase"/>
    <property type="match status" value="1"/>
</dbReference>
<dbReference type="Gene3D" id="3.40.50.1480">
    <property type="entry name" value="Adenosylhomocysteinase-like"/>
    <property type="match status" value="1"/>
</dbReference>
<dbReference type="Gene3D" id="3.40.50.720">
    <property type="entry name" value="NAD(P)-binding Rossmann-like Domain"/>
    <property type="match status" value="1"/>
</dbReference>
<dbReference type="HAMAP" id="MF_00563">
    <property type="entry name" value="AdoHcyase"/>
    <property type="match status" value="1"/>
</dbReference>
<dbReference type="InterPro" id="IPR042172">
    <property type="entry name" value="Adenosylhomocyst_ase-like_sf"/>
</dbReference>
<dbReference type="InterPro" id="IPR000043">
    <property type="entry name" value="Adenosylhomocysteinase-like"/>
</dbReference>
<dbReference type="InterPro" id="IPR015878">
    <property type="entry name" value="Ado_hCys_hydrolase_NAD-bd"/>
</dbReference>
<dbReference type="InterPro" id="IPR036291">
    <property type="entry name" value="NAD(P)-bd_dom_sf"/>
</dbReference>
<dbReference type="InterPro" id="IPR020082">
    <property type="entry name" value="S-Ado-L-homoCys_hydrolase_CS"/>
</dbReference>
<dbReference type="NCBIfam" id="TIGR00936">
    <property type="entry name" value="ahcY"/>
    <property type="match status" value="1"/>
</dbReference>
<dbReference type="NCBIfam" id="NF004005">
    <property type="entry name" value="PRK05476.2-3"/>
    <property type="match status" value="1"/>
</dbReference>
<dbReference type="PANTHER" id="PTHR23420">
    <property type="entry name" value="ADENOSYLHOMOCYSTEINASE"/>
    <property type="match status" value="1"/>
</dbReference>
<dbReference type="PANTHER" id="PTHR23420:SF0">
    <property type="entry name" value="ADENOSYLHOMOCYSTEINASE"/>
    <property type="match status" value="1"/>
</dbReference>
<dbReference type="Pfam" id="PF05221">
    <property type="entry name" value="AdoHcyase"/>
    <property type="match status" value="1"/>
</dbReference>
<dbReference type="Pfam" id="PF00670">
    <property type="entry name" value="AdoHcyase_NAD"/>
    <property type="match status" value="1"/>
</dbReference>
<dbReference type="PIRSF" id="PIRSF001109">
    <property type="entry name" value="Ad_hcy_hydrolase"/>
    <property type="match status" value="1"/>
</dbReference>
<dbReference type="SMART" id="SM00996">
    <property type="entry name" value="AdoHcyase"/>
    <property type="match status" value="1"/>
</dbReference>
<dbReference type="SMART" id="SM00997">
    <property type="entry name" value="AdoHcyase_NAD"/>
    <property type="match status" value="1"/>
</dbReference>
<dbReference type="SUPFAM" id="SSF52283">
    <property type="entry name" value="Formate/glycerate dehydrogenase catalytic domain-like"/>
    <property type="match status" value="1"/>
</dbReference>
<dbReference type="SUPFAM" id="SSF51735">
    <property type="entry name" value="NAD(P)-binding Rossmann-fold domains"/>
    <property type="match status" value="1"/>
</dbReference>
<dbReference type="PROSITE" id="PS00738">
    <property type="entry name" value="ADOHCYASE_1"/>
    <property type="match status" value="1"/>
</dbReference>
<dbReference type="PROSITE" id="PS00739">
    <property type="entry name" value="ADOHCYASE_2"/>
    <property type="match status" value="1"/>
</dbReference>
<feature type="chain" id="PRO_1000129283" description="Adenosylhomocysteinase">
    <location>
        <begin position="1"/>
        <end position="479"/>
    </location>
</feature>
<feature type="binding site" evidence="1">
    <location>
        <position position="66"/>
    </location>
    <ligand>
        <name>substrate</name>
    </ligand>
</feature>
<feature type="binding site" evidence="1">
    <location>
        <position position="142"/>
    </location>
    <ligand>
        <name>substrate</name>
    </ligand>
</feature>
<feature type="binding site" evidence="1">
    <location>
        <position position="203"/>
    </location>
    <ligand>
        <name>substrate</name>
    </ligand>
</feature>
<feature type="binding site" evidence="1">
    <location>
        <begin position="204"/>
        <end position="206"/>
    </location>
    <ligand>
        <name>NAD(+)</name>
        <dbReference type="ChEBI" id="CHEBI:57540"/>
    </ligand>
</feature>
<feature type="binding site" evidence="1">
    <location>
        <position position="233"/>
    </location>
    <ligand>
        <name>substrate</name>
    </ligand>
</feature>
<feature type="binding site" evidence="1">
    <location>
        <position position="237"/>
    </location>
    <ligand>
        <name>substrate</name>
    </ligand>
</feature>
<feature type="binding site" evidence="1">
    <location>
        <position position="238"/>
    </location>
    <ligand>
        <name>NAD(+)</name>
        <dbReference type="ChEBI" id="CHEBI:57540"/>
    </ligand>
</feature>
<feature type="binding site" evidence="1">
    <location>
        <begin position="267"/>
        <end position="272"/>
    </location>
    <ligand>
        <name>NAD(+)</name>
        <dbReference type="ChEBI" id="CHEBI:57540"/>
    </ligand>
</feature>
<feature type="binding site" evidence="1">
    <location>
        <position position="290"/>
    </location>
    <ligand>
        <name>NAD(+)</name>
        <dbReference type="ChEBI" id="CHEBI:57540"/>
    </ligand>
</feature>
<feature type="binding site" evidence="1">
    <location>
        <position position="325"/>
    </location>
    <ligand>
        <name>NAD(+)</name>
        <dbReference type="ChEBI" id="CHEBI:57540"/>
    </ligand>
</feature>
<feature type="binding site" evidence="1">
    <location>
        <begin position="346"/>
        <end position="348"/>
    </location>
    <ligand>
        <name>NAD(+)</name>
        <dbReference type="ChEBI" id="CHEBI:57540"/>
    </ligand>
</feature>
<feature type="binding site" evidence="1">
    <location>
        <position position="394"/>
    </location>
    <ligand>
        <name>NAD(+)</name>
        <dbReference type="ChEBI" id="CHEBI:57540"/>
    </ligand>
</feature>
<protein>
    <recommendedName>
        <fullName evidence="1">Adenosylhomocysteinase</fullName>
        <ecNumber evidence="1">3.13.2.1</ecNumber>
    </recommendedName>
    <alternativeName>
        <fullName evidence="1">S-adenosyl-L-homocysteine hydrolase</fullName>
        <shortName evidence="1">AdoHcyase</shortName>
    </alternativeName>
</protein>
<comment type="function">
    <text evidence="1">May play a key role in the regulation of the intracellular concentration of adenosylhomocysteine.</text>
</comment>
<comment type="catalytic activity">
    <reaction evidence="1">
        <text>S-adenosyl-L-homocysteine + H2O = L-homocysteine + adenosine</text>
        <dbReference type="Rhea" id="RHEA:21708"/>
        <dbReference type="ChEBI" id="CHEBI:15377"/>
        <dbReference type="ChEBI" id="CHEBI:16335"/>
        <dbReference type="ChEBI" id="CHEBI:57856"/>
        <dbReference type="ChEBI" id="CHEBI:58199"/>
        <dbReference type="EC" id="3.13.2.1"/>
    </reaction>
</comment>
<comment type="cofactor">
    <cofactor evidence="1">
        <name>NAD(+)</name>
        <dbReference type="ChEBI" id="CHEBI:57540"/>
    </cofactor>
    <text evidence="1">Binds 1 NAD(+) per subunit.</text>
</comment>
<comment type="pathway">
    <text evidence="1">Amino-acid biosynthesis; L-homocysteine biosynthesis; L-homocysteine from S-adenosyl-L-homocysteine: step 1/1.</text>
</comment>
<comment type="subcellular location">
    <subcellularLocation>
        <location evidence="1">Cytoplasm</location>
    </subcellularLocation>
</comment>
<comment type="similarity">
    <text evidence="1">Belongs to the adenosylhomocysteinase family.</text>
</comment>
<organism>
    <name type="scientific">Nitratidesulfovibrio vulgaris (strain DSM 19637 / Miyazaki F)</name>
    <name type="common">Desulfovibrio vulgaris</name>
    <dbReference type="NCBI Taxonomy" id="883"/>
    <lineage>
        <taxon>Bacteria</taxon>
        <taxon>Pseudomonadati</taxon>
        <taxon>Thermodesulfobacteriota</taxon>
        <taxon>Desulfovibrionia</taxon>
        <taxon>Desulfovibrionales</taxon>
        <taxon>Desulfovibrionaceae</taxon>
        <taxon>Nitratidesulfovibrio</taxon>
    </lineage>
</organism>
<reference key="1">
    <citation type="submission" date="2008-10" db="EMBL/GenBank/DDBJ databases">
        <title>Complete sequence of Desulfovibrio vulgaris str. 'Miyazaki F'.</title>
        <authorList>
            <person name="Lucas S."/>
            <person name="Copeland A."/>
            <person name="Lapidus A."/>
            <person name="Glavina del Rio T."/>
            <person name="Dalin E."/>
            <person name="Tice H."/>
            <person name="Bruce D."/>
            <person name="Goodwin L."/>
            <person name="Pitluck S."/>
            <person name="Sims D."/>
            <person name="Brettin T."/>
            <person name="Detter J.C."/>
            <person name="Han C."/>
            <person name="Larimer F."/>
            <person name="Land M."/>
            <person name="Hauser L."/>
            <person name="Kyrpides N."/>
            <person name="Mikhailova N."/>
            <person name="Hazen T.C."/>
            <person name="Richardson P."/>
        </authorList>
    </citation>
    <scope>NUCLEOTIDE SEQUENCE [LARGE SCALE GENOMIC DNA]</scope>
    <source>
        <strain>DSM 19637 / Miyazaki F</strain>
    </source>
</reference>
<sequence>MTDAKRAQALDLSLANKVADMALADFGHKEMQLSEREVPGLMELIRMYGVSKPLKGLRVTGSLHMTIQTAMLIKTLYELGADIRWASCNIFSTQDHAAAAIADSGMAKVFAWKGETLEDYWWCTEMALTWPDGSGPDLLVDDGGDATLMIHKGVEVENNPELLKQAYDNKEFQIIMDRLALAYQNDPGRWQRVAARVRGVSEETTTGVHRLYQLEQEGKLLFPAINVNDSVTKSKFDNLYGCRESLADGIKRATDVMVAGKVVVVAGYGDVGKGCAQSMRGFGARVLVTEIDPICALQAAMEGYEVTTMEKAVEEGDIFVTATGNYKVITGEHMEAMKDEAIVCNIGHFDNEIDMHYLETTPGCTCLNIKPQVDKWTLKSGRSIIVLAEGRLVNLGCATGHPSFVMSNSFTNQTLAQIELATNPDLERKVYILPKKLDEQVARLHLARLGVTLTTLTKEQADYIGVPVDGPYKPGHYRY</sequence>
<accession>B8DR41</accession>
<gene>
    <name evidence="1" type="primary">ahcY</name>
    <name type="ordered locus">DvMF_2580</name>
</gene>
<name>SAHH_NITV9</name>
<evidence type="ECO:0000255" key="1">
    <source>
        <dbReference type="HAMAP-Rule" id="MF_00563"/>
    </source>
</evidence>